<protein>
    <recommendedName>
        <fullName evidence="4">Protein SMALL AUXIN UP-REGULATED RNA 16</fullName>
    </recommendedName>
</protein>
<organism>
    <name type="scientific">Arabidopsis thaliana</name>
    <name type="common">Mouse-ear cress</name>
    <dbReference type="NCBI Taxonomy" id="3702"/>
    <lineage>
        <taxon>Eukaryota</taxon>
        <taxon>Viridiplantae</taxon>
        <taxon>Streptophyta</taxon>
        <taxon>Embryophyta</taxon>
        <taxon>Tracheophyta</taxon>
        <taxon>Spermatophyta</taxon>
        <taxon>Magnoliopsida</taxon>
        <taxon>eudicotyledons</taxon>
        <taxon>Gunneridae</taxon>
        <taxon>Pentapetalae</taxon>
        <taxon>rosids</taxon>
        <taxon>malvids</taxon>
        <taxon>Brassicales</taxon>
        <taxon>Brassicaceae</taxon>
        <taxon>Camelineae</taxon>
        <taxon>Arabidopsis</taxon>
    </lineage>
</organism>
<name>SAU16_ARATH</name>
<feature type="chain" id="PRO_0000455147" description="Protein SMALL AUXIN UP-REGULATED RNA 16">
    <location>
        <begin position="1"/>
        <end position="105"/>
    </location>
</feature>
<comment type="function">
    <text evidence="1 3">Provide a mechanistic link between auxin and plasma membrane H(+)-ATPases (PM H(+)-ATPases, e.g. AHA1 and AHA2), and triggers PM H(+)-ATPases activity by promoting phosphorylation of their C-terminal autoinhibitory domain as a result of PP2C-D subfamily of type 2C phosphatases inhibition, thus leading to the acidification of the apoplast and the facilitation of solutes and water uptake to drive cell expansion (By similarity). Triggers plant growth probably by promoting cell elongation (PubMed:29258424). Regulates branch angles and bending (PubMed:29258424).</text>
</comment>
<comment type="subcellular location">
    <subcellularLocation>
        <location evidence="2">Cell membrane</location>
        <topology evidence="2">Peripheral membrane protein</topology>
    </subcellularLocation>
</comment>
<comment type="tissue specificity">
    <text evidence="3">Expressed in etiolated hypocotyls, cotyledons, leaves, flowers and siliques.</text>
</comment>
<comment type="developmental stage">
    <text evidence="3">In flowers, present in petals, stamen, and pistils styles and stigma.</text>
</comment>
<comment type="induction">
    <text evidence="3">Induced by zeatin (PubMed:29258424). Induced by auxin (PubMed:29258424). Triggered by brassinosteroids (PubMed:29258424). Accumulates in reduced red/far-red light ration (R:FR) conditions mimicking shaded conditions (PubMed:29258424). Repressed by abscisic acid (PubMed:29258424).</text>
</comment>
<comment type="similarity">
    <text evidence="5">Belongs to the ARG7 family.</text>
</comment>
<sequence>MAVKRSSKLTQTAMLKQILKRCSSLGKKQCYDEEGLPLDVPKGHFPVYVGEKRTRYIVPISFLTHPEFLILLQQAEEEFGFRHDMGGLTIPCEEVVFLSLTSMIR</sequence>
<gene>
    <name evidence="4" type="primary">SAUR16</name>
    <name evidence="6" type="ordered locus">At4g38860</name>
    <name evidence="5" type="ORF">F19H22.1</name>
    <name evidence="7" type="ORF">T9A14</name>
</gene>
<evidence type="ECO:0000250" key="1">
    <source>
        <dbReference type="UniProtKB" id="O65648"/>
    </source>
</evidence>
<evidence type="ECO:0000250" key="2">
    <source>
        <dbReference type="UniProtKB" id="Q9FJG1"/>
    </source>
</evidence>
<evidence type="ECO:0000269" key="3">
    <source>
    </source>
</evidence>
<evidence type="ECO:0000303" key="4">
    <source>
    </source>
</evidence>
<evidence type="ECO:0000305" key="5"/>
<evidence type="ECO:0000312" key="6">
    <source>
        <dbReference type="Araport" id="AT4G38860"/>
    </source>
</evidence>
<evidence type="ECO:0000312" key="7">
    <source>
        <dbReference type="EMBL" id="CAB38620.1"/>
    </source>
</evidence>
<dbReference type="EMBL" id="AL035656">
    <property type="protein sequence ID" value="CAB38620.1"/>
    <property type="molecule type" value="Genomic_DNA"/>
</dbReference>
<dbReference type="EMBL" id="AL161594">
    <property type="protein sequence ID" value="CAB80549.1"/>
    <property type="molecule type" value="Genomic_DNA"/>
</dbReference>
<dbReference type="EMBL" id="CP002687">
    <property type="protein sequence ID" value="AEE86984.1"/>
    <property type="molecule type" value="Genomic_DNA"/>
</dbReference>
<dbReference type="EMBL" id="BT011706">
    <property type="protein sequence ID" value="AAS49069.1"/>
    <property type="molecule type" value="mRNA"/>
</dbReference>
<dbReference type="EMBL" id="AK221793">
    <property type="protein sequence ID" value="BAD93936.1"/>
    <property type="molecule type" value="mRNA"/>
</dbReference>
<dbReference type="EMBL" id="AK230398">
    <property type="protein sequence ID" value="BAF02196.1"/>
    <property type="molecule type" value="mRNA"/>
</dbReference>
<dbReference type="PIR" id="T06085">
    <property type="entry name" value="T06085"/>
</dbReference>
<dbReference type="RefSeq" id="NP_195597.1">
    <property type="nucleotide sequence ID" value="NM_120046.4"/>
</dbReference>
<dbReference type="FunCoup" id="Q9T0J3">
    <property type="interactions" value="572"/>
</dbReference>
<dbReference type="STRING" id="3702.Q9T0J3"/>
<dbReference type="PaxDb" id="3702-AT4G38860.1"/>
<dbReference type="ProteomicsDB" id="177197"/>
<dbReference type="EnsemblPlants" id="AT4G38860.1">
    <property type="protein sequence ID" value="AT4G38860.1"/>
    <property type="gene ID" value="AT4G38860"/>
</dbReference>
<dbReference type="GeneID" id="830041"/>
<dbReference type="Gramene" id="AT4G38860.1">
    <property type="protein sequence ID" value="AT4G38860.1"/>
    <property type="gene ID" value="AT4G38860"/>
</dbReference>
<dbReference type="KEGG" id="ath:AT4G38860"/>
<dbReference type="Araport" id="AT4G38860"/>
<dbReference type="TAIR" id="AT4G38860">
    <property type="gene designation" value="SAUR16"/>
</dbReference>
<dbReference type="eggNOG" id="ENOG502RZ3M">
    <property type="taxonomic scope" value="Eukaryota"/>
</dbReference>
<dbReference type="HOGENOM" id="CLU_098106_2_3_1"/>
<dbReference type="InParanoid" id="Q9T0J3"/>
<dbReference type="OMA" id="PCERVAF"/>
<dbReference type="OrthoDB" id="1841988at2759"/>
<dbReference type="PhylomeDB" id="Q9T0J3"/>
<dbReference type="PRO" id="PR:Q9T0J3"/>
<dbReference type="Proteomes" id="UP000006548">
    <property type="component" value="Chromosome 4"/>
</dbReference>
<dbReference type="ExpressionAtlas" id="Q9T0J3">
    <property type="expression patterns" value="baseline and differential"/>
</dbReference>
<dbReference type="GO" id="GO:0005886">
    <property type="term" value="C:plasma membrane"/>
    <property type="evidence" value="ECO:0007669"/>
    <property type="project" value="UniProtKB-SubCell"/>
</dbReference>
<dbReference type="GO" id="GO:0009737">
    <property type="term" value="P:response to abscisic acid"/>
    <property type="evidence" value="ECO:0000270"/>
    <property type="project" value="UniProtKB"/>
</dbReference>
<dbReference type="GO" id="GO:0009733">
    <property type="term" value="P:response to auxin"/>
    <property type="evidence" value="ECO:0000270"/>
    <property type="project" value="UniProtKB"/>
</dbReference>
<dbReference type="GO" id="GO:0009741">
    <property type="term" value="P:response to brassinosteroid"/>
    <property type="evidence" value="ECO:0000270"/>
    <property type="project" value="UniProtKB"/>
</dbReference>
<dbReference type="GO" id="GO:0009639">
    <property type="term" value="P:response to red or far red light"/>
    <property type="evidence" value="ECO:0000270"/>
    <property type="project" value="UniProtKB"/>
</dbReference>
<dbReference type="InterPro" id="IPR003676">
    <property type="entry name" value="SAUR_fam"/>
</dbReference>
<dbReference type="PANTHER" id="PTHR31929">
    <property type="entry name" value="SAUR-LIKE AUXIN-RESPONSIVE PROTEIN FAMILY-RELATED"/>
    <property type="match status" value="1"/>
</dbReference>
<dbReference type="Pfam" id="PF02519">
    <property type="entry name" value="Auxin_inducible"/>
    <property type="match status" value="1"/>
</dbReference>
<proteinExistence type="evidence at transcript level"/>
<keyword id="KW-1003">Cell membrane</keyword>
<keyword id="KW-0217">Developmental protein</keyword>
<keyword id="KW-0341">Growth regulation</keyword>
<keyword id="KW-0472">Membrane</keyword>
<keyword id="KW-1185">Reference proteome</keyword>
<accession>Q9T0J3</accession>
<reference key="1">
    <citation type="journal article" date="1999" name="Nature">
        <title>Sequence and analysis of chromosome 4 of the plant Arabidopsis thaliana.</title>
        <authorList>
            <person name="Mayer K.F.X."/>
            <person name="Schueller C."/>
            <person name="Wambutt R."/>
            <person name="Murphy G."/>
            <person name="Volckaert G."/>
            <person name="Pohl T."/>
            <person name="Duesterhoeft A."/>
            <person name="Stiekema W."/>
            <person name="Entian K.-D."/>
            <person name="Terryn N."/>
            <person name="Harris B."/>
            <person name="Ansorge W."/>
            <person name="Brandt P."/>
            <person name="Grivell L.A."/>
            <person name="Rieger M."/>
            <person name="Weichselgartner M."/>
            <person name="de Simone V."/>
            <person name="Obermaier B."/>
            <person name="Mache R."/>
            <person name="Mueller M."/>
            <person name="Kreis M."/>
            <person name="Delseny M."/>
            <person name="Puigdomenech P."/>
            <person name="Watson M."/>
            <person name="Schmidtheini T."/>
            <person name="Reichert B."/>
            <person name="Portetelle D."/>
            <person name="Perez-Alonso M."/>
            <person name="Boutry M."/>
            <person name="Bancroft I."/>
            <person name="Vos P."/>
            <person name="Hoheisel J."/>
            <person name="Zimmermann W."/>
            <person name="Wedler H."/>
            <person name="Ridley P."/>
            <person name="Langham S.-A."/>
            <person name="McCullagh B."/>
            <person name="Bilham L."/>
            <person name="Robben J."/>
            <person name="van der Schueren J."/>
            <person name="Grymonprez B."/>
            <person name="Chuang Y.-J."/>
            <person name="Vandenbussche F."/>
            <person name="Braeken M."/>
            <person name="Weltjens I."/>
            <person name="Voet M."/>
            <person name="Bastiaens I."/>
            <person name="Aert R."/>
            <person name="Defoor E."/>
            <person name="Weitzenegger T."/>
            <person name="Bothe G."/>
            <person name="Ramsperger U."/>
            <person name="Hilbert H."/>
            <person name="Braun M."/>
            <person name="Holzer E."/>
            <person name="Brandt A."/>
            <person name="Peters S."/>
            <person name="van Staveren M."/>
            <person name="Dirkse W."/>
            <person name="Mooijman P."/>
            <person name="Klein Lankhorst R."/>
            <person name="Rose M."/>
            <person name="Hauf J."/>
            <person name="Koetter P."/>
            <person name="Berneiser S."/>
            <person name="Hempel S."/>
            <person name="Feldpausch M."/>
            <person name="Lamberth S."/>
            <person name="Van den Daele H."/>
            <person name="De Keyser A."/>
            <person name="Buysshaert C."/>
            <person name="Gielen J."/>
            <person name="Villarroel R."/>
            <person name="De Clercq R."/>
            <person name="van Montagu M."/>
            <person name="Rogers J."/>
            <person name="Cronin A."/>
            <person name="Quail M.A."/>
            <person name="Bray-Allen S."/>
            <person name="Clark L."/>
            <person name="Doggett J."/>
            <person name="Hall S."/>
            <person name="Kay M."/>
            <person name="Lennard N."/>
            <person name="McLay K."/>
            <person name="Mayes R."/>
            <person name="Pettett A."/>
            <person name="Rajandream M.A."/>
            <person name="Lyne M."/>
            <person name="Benes V."/>
            <person name="Rechmann S."/>
            <person name="Borkova D."/>
            <person name="Bloecker H."/>
            <person name="Scharfe M."/>
            <person name="Grimm M."/>
            <person name="Loehnert T.-H."/>
            <person name="Dose S."/>
            <person name="de Haan M."/>
            <person name="Maarse A.C."/>
            <person name="Schaefer M."/>
            <person name="Mueller-Auer S."/>
            <person name="Gabel C."/>
            <person name="Fuchs M."/>
            <person name="Fartmann B."/>
            <person name="Granderath K."/>
            <person name="Dauner D."/>
            <person name="Herzl A."/>
            <person name="Neumann S."/>
            <person name="Argiriou A."/>
            <person name="Vitale D."/>
            <person name="Liguori R."/>
            <person name="Piravandi E."/>
            <person name="Massenet O."/>
            <person name="Quigley F."/>
            <person name="Clabauld G."/>
            <person name="Muendlein A."/>
            <person name="Felber R."/>
            <person name="Schnabl S."/>
            <person name="Hiller R."/>
            <person name="Schmidt W."/>
            <person name="Lecharny A."/>
            <person name="Aubourg S."/>
            <person name="Chefdor F."/>
            <person name="Cooke R."/>
            <person name="Berger C."/>
            <person name="Monfort A."/>
            <person name="Casacuberta E."/>
            <person name="Gibbons T."/>
            <person name="Weber N."/>
            <person name="Vandenbol M."/>
            <person name="Bargues M."/>
            <person name="Terol J."/>
            <person name="Torres A."/>
            <person name="Perez-Perez A."/>
            <person name="Purnelle B."/>
            <person name="Bent E."/>
            <person name="Johnson S."/>
            <person name="Tacon D."/>
            <person name="Jesse T."/>
            <person name="Heijnen L."/>
            <person name="Schwarz S."/>
            <person name="Scholler P."/>
            <person name="Heber S."/>
            <person name="Francs P."/>
            <person name="Bielke C."/>
            <person name="Frishman D."/>
            <person name="Haase D."/>
            <person name="Lemcke K."/>
            <person name="Mewes H.-W."/>
            <person name="Stocker S."/>
            <person name="Zaccaria P."/>
            <person name="Bevan M."/>
            <person name="Wilson R.K."/>
            <person name="de la Bastide M."/>
            <person name="Habermann K."/>
            <person name="Parnell L."/>
            <person name="Dedhia N."/>
            <person name="Gnoj L."/>
            <person name="Schutz K."/>
            <person name="Huang E."/>
            <person name="Spiegel L."/>
            <person name="Sekhon M."/>
            <person name="Murray J."/>
            <person name="Sheet P."/>
            <person name="Cordes M."/>
            <person name="Abu-Threideh J."/>
            <person name="Stoneking T."/>
            <person name="Kalicki J."/>
            <person name="Graves T."/>
            <person name="Harmon G."/>
            <person name="Edwards J."/>
            <person name="Latreille P."/>
            <person name="Courtney L."/>
            <person name="Cloud J."/>
            <person name="Abbott A."/>
            <person name="Scott K."/>
            <person name="Johnson D."/>
            <person name="Minx P."/>
            <person name="Bentley D."/>
            <person name="Fulton B."/>
            <person name="Miller N."/>
            <person name="Greco T."/>
            <person name="Kemp K."/>
            <person name="Kramer J."/>
            <person name="Fulton L."/>
            <person name="Mardis E."/>
            <person name="Dante M."/>
            <person name="Pepin K."/>
            <person name="Hillier L.W."/>
            <person name="Nelson J."/>
            <person name="Spieth J."/>
            <person name="Ryan E."/>
            <person name="Andrews S."/>
            <person name="Geisel C."/>
            <person name="Layman D."/>
            <person name="Du H."/>
            <person name="Ali J."/>
            <person name="Berghoff A."/>
            <person name="Jones K."/>
            <person name="Drone K."/>
            <person name="Cotton M."/>
            <person name="Joshu C."/>
            <person name="Antonoiu B."/>
            <person name="Zidanic M."/>
            <person name="Strong C."/>
            <person name="Sun H."/>
            <person name="Lamar B."/>
            <person name="Yordan C."/>
            <person name="Ma P."/>
            <person name="Zhong J."/>
            <person name="Preston R."/>
            <person name="Vil D."/>
            <person name="Shekher M."/>
            <person name="Matero A."/>
            <person name="Shah R."/>
            <person name="Swaby I.K."/>
            <person name="O'Shaughnessy A."/>
            <person name="Rodriguez M."/>
            <person name="Hoffman J."/>
            <person name="Till S."/>
            <person name="Granat S."/>
            <person name="Shohdy N."/>
            <person name="Hasegawa A."/>
            <person name="Hameed A."/>
            <person name="Lodhi M."/>
            <person name="Johnson A."/>
            <person name="Chen E."/>
            <person name="Marra M.A."/>
            <person name="Martienssen R."/>
            <person name="McCombie W.R."/>
        </authorList>
    </citation>
    <scope>NUCLEOTIDE SEQUENCE [LARGE SCALE GENOMIC DNA]</scope>
    <source>
        <strain>cv. Columbia</strain>
    </source>
</reference>
<reference key="2">
    <citation type="journal article" date="2017" name="Plant J.">
        <title>Araport11: a complete reannotation of the Arabidopsis thaliana reference genome.</title>
        <authorList>
            <person name="Cheng C.Y."/>
            <person name="Krishnakumar V."/>
            <person name="Chan A.P."/>
            <person name="Thibaud-Nissen F."/>
            <person name="Schobel S."/>
            <person name="Town C.D."/>
        </authorList>
    </citation>
    <scope>GENOME REANNOTATION</scope>
    <source>
        <strain>cv. Columbia</strain>
    </source>
</reference>
<reference key="3">
    <citation type="submission" date="2004-03" db="EMBL/GenBank/DDBJ databases">
        <title>Arabidopsis ORF clones.</title>
        <authorList>
            <person name="Cheuk R.F."/>
            <person name="Chen H."/>
            <person name="Kim C.J."/>
            <person name="Shinn P."/>
            <person name="Carninci P."/>
            <person name="Hayashizaki Y."/>
            <person name="Ishida J."/>
            <person name="Kamiya A."/>
            <person name="Kawai J."/>
            <person name="Narusaka M."/>
            <person name="Sakurai T."/>
            <person name="Satou M."/>
            <person name="Seki M."/>
            <person name="Shinozaki K."/>
            <person name="Ecker J.R."/>
        </authorList>
    </citation>
    <scope>NUCLEOTIDE SEQUENCE [LARGE SCALE MRNA]</scope>
    <source>
        <strain>cv. Columbia</strain>
    </source>
</reference>
<reference key="4">
    <citation type="submission" date="2006-07" db="EMBL/GenBank/DDBJ databases">
        <title>Large-scale analysis of RIKEN Arabidopsis full-length (RAFL) cDNAs.</title>
        <authorList>
            <person name="Totoki Y."/>
            <person name="Seki M."/>
            <person name="Ishida J."/>
            <person name="Nakajima M."/>
            <person name="Enju A."/>
            <person name="Kamiya A."/>
            <person name="Narusaka M."/>
            <person name="Shin-i T."/>
            <person name="Nakagawa M."/>
            <person name="Sakamoto N."/>
            <person name="Oishi K."/>
            <person name="Kohara Y."/>
            <person name="Kobayashi M."/>
            <person name="Toyoda A."/>
            <person name="Sakaki Y."/>
            <person name="Sakurai T."/>
            <person name="Iida K."/>
            <person name="Akiyama K."/>
            <person name="Satou M."/>
            <person name="Toyoda T."/>
            <person name="Konagaya A."/>
            <person name="Carninci P."/>
            <person name="Kawai J."/>
            <person name="Hayashizaki Y."/>
            <person name="Shinozaki K."/>
        </authorList>
    </citation>
    <scope>NUCLEOTIDE SEQUENCE [LARGE SCALE MRNA]</scope>
    <source>
        <strain>cv. Columbia</strain>
    </source>
</reference>
<reference key="5">
    <citation type="journal article" date="2017" name="BMC Plant Biol.">
        <title>Divergent regulation of Arabidopsis SAUR genes: a focus on the SAUR10-clade.</title>
        <authorList>
            <person name="van Mourik H."/>
            <person name="van Dijk A.D.J."/>
            <person name="Stortenbeker N."/>
            <person name="Angenent G.C."/>
            <person name="Bemer M."/>
        </authorList>
    </citation>
    <scope>FUNCTION</scope>
    <scope>TISSUE SPECIFICITY</scope>
    <scope>DEVELOPMENTAL STAGE</scope>
    <scope>REPRESSION BY ABSCISIC ACID</scope>
    <scope>INDUCTION BY AUXIN; BRASSINOSTEROIDS; ZEATIN AND REDUCED R:FR LIGHT CONDITIONS</scope>
    <scope>GENE FAMILY</scope>
    <source>
        <strain>cv. Columbia</strain>
    </source>
</reference>